<evidence type="ECO:0000255" key="1">
    <source>
        <dbReference type="HAMAP-Rule" id="MF_00482"/>
    </source>
</evidence>
<name>PSAB_NYMAL</name>
<sequence>MALRFPRFSQGLAQDPTTRRIWFGIATAHDFESHDDITEERLYQNIFASHFGQLAIIFLWTSGNLFHVAWQGNFESWVQDPLHVRPIAHTIWDPHFGQPAVEAFTRGGALGPVNIAYSGVYQWWYTIGLRTNEDLYTGALFLLFISAISLVGGWLHLQPKWKPSVSWFKNAESRLNHHLSGLFGVSSLAWAGHLVHVAIPGSRGEYVRWNNFLDVLPYPQGLGPLFTGQWNLYAQNPDSSSHLFGTSQGAGTAILTLLGGFHPQTQSLWLTDIAHHHLAIAFIFLVAGHMYRTNFGIGHSIKDLLEAHIPPGGRLGRGHKGLYDTINNSIHFQLGLALASLGVITSLVAQHMYSLPAYAFIAQDFTTQAALYTHHQYIAGFIMTGAFAHGAIFFIRDYNPQQNEDNVLARMLDHKEAIISHLSWASLFLGFHTLGLYVHNDVMLAFGTPEKQILIEPIFAQWIQSAHGKTSYGFDVLLSSTNGPAFNAGQSLWLPGWLNAINENRNSLFLTIGPGDFLVHHAIALGLHTTTLILVKGALDARGSKLMPDKKDFGYSFPCDGPGRGGTCDISAWDAFYLAVFWMLNTIGWVTFYWHWKHITLWQGNVSQFNESSTYLMGWLRDYLWLNSSQLINGYNPFGMNSLSVWAWMFLFGHLVWATGFMFLISWRGYWQELIETLAWAHERTPLANLIRWRDKPVALSIVQARLVGLAHFSVGYIFTYAAFLIASTSGKFG</sequence>
<feature type="chain" id="PRO_0000088624" description="Photosystem I P700 chlorophyll a apoprotein A2">
    <location>
        <begin position="1"/>
        <end position="734"/>
    </location>
</feature>
<feature type="transmembrane region" description="Helical; Name=I" evidence="1">
    <location>
        <begin position="46"/>
        <end position="69"/>
    </location>
</feature>
<feature type="transmembrane region" description="Helical; Name=II" evidence="1">
    <location>
        <begin position="135"/>
        <end position="158"/>
    </location>
</feature>
<feature type="transmembrane region" description="Helical; Name=III" evidence="1">
    <location>
        <begin position="175"/>
        <end position="199"/>
    </location>
</feature>
<feature type="transmembrane region" description="Helical; Name=IV" evidence="1">
    <location>
        <begin position="273"/>
        <end position="291"/>
    </location>
</feature>
<feature type="transmembrane region" description="Helical; Name=V" evidence="1">
    <location>
        <begin position="330"/>
        <end position="353"/>
    </location>
</feature>
<feature type="transmembrane region" description="Helical; Name=VI" evidence="1">
    <location>
        <begin position="369"/>
        <end position="395"/>
    </location>
</feature>
<feature type="transmembrane region" description="Helical; Name=VII" evidence="1">
    <location>
        <begin position="417"/>
        <end position="439"/>
    </location>
</feature>
<feature type="transmembrane region" description="Helical; Name=VIII" evidence="1">
    <location>
        <begin position="517"/>
        <end position="535"/>
    </location>
</feature>
<feature type="transmembrane region" description="Helical; Name=IX" evidence="1">
    <location>
        <begin position="575"/>
        <end position="596"/>
    </location>
</feature>
<feature type="transmembrane region" description="Helical; Name=X" evidence="1">
    <location>
        <begin position="643"/>
        <end position="665"/>
    </location>
</feature>
<feature type="transmembrane region" description="Helical; Name=XI" evidence="1">
    <location>
        <begin position="707"/>
        <end position="727"/>
    </location>
</feature>
<feature type="binding site" evidence="1">
    <location>
        <position position="559"/>
    </location>
    <ligand>
        <name>[4Fe-4S] cluster</name>
        <dbReference type="ChEBI" id="CHEBI:49883"/>
        <note>ligand shared between dimeric partners</note>
    </ligand>
</feature>
<feature type="binding site" evidence="1">
    <location>
        <position position="568"/>
    </location>
    <ligand>
        <name>[4Fe-4S] cluster</name>
        <dbReference type="ChEBI" id="CHEBI:49883"/>
        <note>ligand shared between dimeric partners</note>
    </ligand>
</feature>
<feature type="binding site" description="axial binding residue" evidence="1">
    <location>
        <position position="654"/>
    </location>
    <ligand>
        <name>chlorophyll a</name>
        <dbReference type="ChEBI" id="CHEBI:58416"/>
        <label>B1</label>
    </ligand>
    <ligandPart>
        <name>Mg</name>
        <dbReference type="ChEBI" id="CHEBI:25107"/>
    </ligandPart>
</feature>
<feature type="binding site" description="axial binding residue" evidence="1">
    <location>
        <position position="662"/>
    </location>
    <ligand>
        <name>chlorophyll a</name>
        <dbReference type="ChEBI" id="CHEBI:58416"/>
        <label>B3</label>
    </ligand>
    <ligandPart>
        <name>Mg</name>
        <dbReference type="ChEBI" id="CHEBI:25107"/>
    </ligandPart>
</feature>
<feature type="binding site" evidence="1">
    <location>
        <position position="670"/>
    </location>
    <ligand>
        <name>chlorophyll a</name>
        <dbReference type="ChEBI" id="CHEBI:58416"/>
        <label>B3</label>
    </ligand>
</feature>
<feature type="binding site" evidence="1">
    <location>
        <position position="671"/>
    </location>
    <ligand>
        <name>phylloquinone</name>
        <dbReference type="ChEBI" id="CHEBI:18067"/>
        <label>B</label>
    </ligand>
</feature>
<protein>
    <recommendedName>
        <fullName evidence="1">Photosystem I P700 chlorophyll a apoprotein A2</fullName>
        <ecNumber evidence="1">1.97.1.12</ecNumber>
    </recommendedName>
    <alternativeName>
        <fullName evidence="1">PSI-B</fullName>
    </alternativeName>
    <alternativeName>
        <fullName evidence="1">PsaB</fullName>
    </alternativeName>
</protein>
<keyword id="KW-0004">4Fe-4S</keyword>
<keyword id="KW-0148">Chlorophyll</keyword>
<keyword id="KW-0150">Chloroplast</keyword>
<keyword id="KW-0157">Chromophore</keyword>
<keyword id="KW-0249">Electron transport</keyword>
<keyword id="KW-0408">Iron</keyword>
<keyword id="KW-0411">Iron-sulfur</keyword>
<keyword id="KW-0460">Magnesium</keyword>
<keyword id="KW-0472">Membrane</keyword>
<keyword id="KW-0479">Metal-binding</keyword>
<keyword id="KW-0560">Oxidoreductase</keyword>
<keyword id="KW-0602">Photosynthesis</keyword>
<keyword id="KW-0603">Photosystem I</keyword>
<keyword id="KW-0934">Plastid</keyword>
<keyword id="KW-0793">Thylakoid</keyword>
<keyword id="KW-0812">Transmembrane</keyword>
<keyword id="KW-1133">Transmembrane helix</keyword>
<keyword id="KW-0813">Transport</keyword>
<dbReference type="EC" id="1.97.1.12" evidence="1"/>
<dbReference type="EMBL" id="AJ627251">
    <property type="protein sequence ID" value="CAF28592.1"/>
    <property type="molecule type" value="Genomic_DNA"/>
</dbReference>
<dbReference type="RefSeq" id="YP_053154.1">
    <property type="nucleotide sequence ID" value="NC_006050.1"/>
</dbReference>
<dbReference type="SMR" id="Q6EW49"/>
<dbReference type="GeneID" id="2896236"/>
<dbReference type="GO" id="GO:0009535">
    <property type="term" value="C:chloroplast thylakoid membrane"/>
    <property type="evidence" value="ECO:0007669"/>
    <property type="project" value="UniProtKB-SubCell"/>
</dbReference>
<dbReference type="GO" id="GO:0009522">
    <property type="term" value="C:photosystem I"/>
    <property type="evidence" value="ECO:0007669"/>
    <property type="project" value="UniProtKB-KW"/>
</dbReference>
<dbReference type="GO" id="GO:0051539">
    <property type="term" value="F:4 iron, 4 sulfur cluster binding"/>
    <property type="evidence" value="ECO:0007669"/>
    <property type="project" value="UniProtKB-KW"/>
</dbReference>
<dbReference type="GO" id="GO:0016168">
    <property type="term" value="F:chlorophyll binding"/>
    <property type="evidence" value="ECO:0007669"/>
    <property type="project" value="UniProtKB-KW"/>
</dbReference>
<dbReference type="GO" id="GO:0009055">
    <property type="term" value="F:electron transfer activity"/>
    <property type="evidence" value="ECO:0007669"/>
    <property type="project" value="UniProtKB-UniRule"/>
</dbReference>
<dbReference type="GO" id="GO:0000287">
    <property type="term" value="F:magnesium ion binding"/>
    <property type="evidence" value="ECO:0007669"/>
    <property type="project" value="UniProtKB-UniRule"/>
</dbReference>
<dbReference type="GO" id="GO:0016491">
    <property type="term" value="F:oxidoreductase activity"/>
    <property type="evidence" value="ECO:0007669"/>
    <property type="project" value="UniProtKB-KW"/>
</dbReference>
<dbReference type="GO" id="GO:0015979">
    <property type="term" value="P:photosynthesis"/>
    <property type="evidence" value="ECO:0007669"/>
    <property type="project" value="UniProtKB-UniRule"/>
</dbReference>
<dbReference type="FunFam" id="1.20.1130.10:FF:000001">
    <property type="entry name" value="Photosystem I P700 chlorophyll a apoprotein A2"/>
    <property type="match status" value="1"/>
</dbReference>
<dbReference type="Gene3D" id="1.20.1130.10">
    <property type="entry name" value="Photosystem I PsaA/PsaB"/>
    <property type="match status" value="1"/>
</dbReference>
<dbReference type="HAMAP" id="MF_00482">
    <property type="entry name" value="PSI_PsaB"/>
    <property type="match status" value="1"/>
</dbReference>
<dbReference type="InterPro" id="IPR001280">
    <property type="entry name" value="PSI_PsaA/B"/>
</dbReference>
<dbReference type="InterPro" id="IPR020586">
    <property type="entry name" value="PSI_PsaA/B_CS"/>
</dbReference>
<dbReference type="InterPro" id="IPR036408">
    <property type="entry name" value="PSI_PsaA/B_sf"/>
</dbReference>
<dbReference type="InterPro" id="IPR006244">
    <property type="entry name" value="PSI_PsaB"/>
</dbReference>
<dbReference type="NCBIfam" id="TIGR01336">
    <property type="entry name" value="psaB"/>
    <property type="match status" value="1"/>
</dbReference>
<dbReference type="PANTHER" id="PTHR30128">
    <property type="entry name" value="OUTER MEMBRANE PROTEIN, OMPA-RELATED"/>
    <property type="match status" value="1"/>
</dbReference>
<dbReference type="PANTHER" id="PTHR30128:SF19">
    <property type="entry name" value="PHOTOSYSTEM I P700 CHLOROPHYLL A APOPROTEIN A1-RELATED"/>
    <property type="match status" value="1"/>
</dbReference>
<dbReference type="Pfam" id="PF00223">
    <property type="entry name" value="PsaA_PsaB"/>
    <property type="match status" value="1"/>
</dbReference>
<dbReference type="PIRSF" id="PIRSF002905">
    <property type="entry name" value="PSI_A"/>
    <property type="match status" value="1"/>
</dbReference>
<dbReference type="PRINTS" id="PR00257">
    <property type="entry name" value="PHOTSYSPSAAB"/>
</dbReference>
<dbReference type="SUPFAM" id="SSF81558">
    <property type="entry name" value="Photosystem I subunits PsaA/PsaB"/>
    <property type="match status" value="1"/>
</dbReference>
<dbReference type="PROSITE" id="PS00419">
    <property type="entry name" value="PHOTOSYSTEM_I_PSAAB"/>
    <property type="match status" value="1"/>
</dbReference>
<reference key="1">
    <citation type="journal article" date="2004" name="Mol. Biol. Evol.">
        <title>The chloroplast genome of Nymphaea alba: whole-genome analyses and the problem of identifying the most basal angiosperm.</title>
        <authorList>
            <person name="Goremykin V.V."/>
            <person name="Hirsch-Ernst K.I."/>
            <person name="Woelfl S."/>
            <person name="Hellwig F.H."/>
        </authorList>
    </citation>
    <scope>NUCLEOTIDE SEQUENCE [LARGE SCALE GENOMIC DNA]</scope>
</reference>
<organism>
    <name type="scientific">Nymphaea alba</name>
    <name type="common">White water-lily</name>
    <name type="synonym">Castalia alba</name>
    <dbReference type="NCBI Taxonomy" id="34301"/>
    <lineage>
        <taxon>Eukaryota</taxon>
        <taxon>Viridiplantae</taxon>
        <taxon>Streptophyta</taxon>
        <taxon>Embryophyta</taxon>
        <taxon>Tracheophyta</taxon>
        <taxon>Spermatophyta</taxon>
        <taxon>Magnoliopsida</taxon>
        <taxon>Nymphaeales</taxon>
        <taxon>Nymphaeaceae</taxon>
        <taxon>Nymphaea</taxon>
    </lineage>
</organism>
<comment type="function">
    <text evidence="1">PsaA and PsaB bind P700, the primary electron donor of photosystem I (PSI), as well as the electron acceptors A0, A1 and FX. PSI is a plastocyanin-ferredoxin oxidoreductase, converting photonic excitation into a charge separation, which transfers an electron from the donor P700 chlorophyll pair to the spectroscopically characterized acceptors A0, A1, FX, FA and FB in turn. Oxidized P700 is reduced on the lumenal side of the thylakoid membrane by plastocyanin.</text>
</comment>
<comment type="catalytic activity">
    <reaction evidence="1">
        <text>reduced [plastocyanin] + hnu + oxidized [2Fe-2S]-[ferredoxin] = oxidized [plastocyanin] + reduced [2Fe-2S]-[ferredoxin]</text>
        <dbReference type="Rhea" id="RHEA:30407"/>
        <dbReference type="Rhea" id="RHEA-COMP:10000"/>
        <dbReference type="Rhea" id="RHEA-COMP:10001"/>
        <dbReference type="Rhea" id="RHEA-COMP:10039"/>
        <dbReference type="Rhea" id="RHEA-COMP:10040"/>
        <dbReference type="ChEBI" id="CHEBI:29036"/>
        <dbReference type="ChEBI" id="CHEBI:30212"/>
        <dbReference type="ChEBI" id="CHEBI:33737"/>
        <dbReference type="ChEBI" id="CHEBI:33738"/>
        <dbReference type="ChEBI" id="CHEBI:49552"/>
        <dbReference type="EC" id="1.97.1.12"/>
    </reaction>
</comment>
<comment type="cofactor">
    <text evidence="1">P700 is a chlorophyll a/chlorophyll a' dimer, A0 is one or more chlorophyll a, A1 is one or both phylloquinones and FX is a shared 4Fe-4S iron-sulfur center.</text>
</comment>
<comment type="subunit">
    <text evidence="1">The PsaA/B heterodimer binds the P700 chlorophyll special pair and subsequent electron acceptors. PSI consists of a core antenna complex that captures photons, and an electron transfer chain that converts photonic excitation into a charge separation. The eukaryotic PSI reaction center is composed of at least 11 subunits.</text>
</comment>
<comment type="subcellular location">
    <subcellularLocation>
        <location evidence="1">Plastid</location>
        <location evidence="1">Chloroplast thylakoid membrane</location>
        <topology evidence="1">Multi-pass membrane protein</topology>
    </subcellularLocation>
</comment>
<comment type="similarity">
    <text evidence="1">Belongs to the PsaA/PsaB family.</text>
</comment>
<gene>
    <name evidence="1" type="primary">psaB</name>
</gene>
<accession>Q6EW49</accession>
<geneLocation type="chloroplast"/>
<proteinExistence type="inferred from homology"/>